<name>MRN3_MEGVI</name>
<protein>
    <recommendedName>
        <fullName>Megourin-3</fullName>
    </recommendedName>
</protein>
<organism evidence="2">
    <name type="scientific">Megoura viciae</name>
    <name type="common">Vetch aphid</name>
    <dbReference type="NCBI Taxonomy" id="112273"/>
    <lineage>
        <taxon>Eukaryota</taxon>
        <taxon>Metazoa</taxon>
        <taxon>Ecdysozoa</taxon>
        <taxon>Arthropoda</taxon>
        <taxon>Hexapoda</taxon>
        <taxon>Insecta</taxon>
        <taxon>Pterygota</taxon>
        <taxon>Neoptera</taxon>
        <taxon>Paraneoptera</taxon>
        <taxon>Hemiptera</taxon>
        <taxon>Sternorrhyncha</taxon>
        <taxon>Aphidomorpha</taxon>
        <taxon>Aphidoidea</taxon>
        <taxon>Aphididae</taxon>
        <taxon>Macrosiphini</taxon>
        <taxon>Megoura</taxon>
    </lineage>
</organism>
<reference evidence="2" key="1">
    <citation type="submission" date="2002-07" db="UniProtKB">
        <authorList>
            <person name="Bulet P."/>
            <person name="Charlet M."/>
            <person name="Chernish S."/>
            <person name="Hetru C."/>
        </authorList>
    </citation>
    <scope>PROTEIN SEQUENCE</scope>
    <scope>FUNCTION</scope>
    <scope>SUBUNIT</scope>
    <scope>INDUCTION</scope>
    <scope>MASS SPECTROMETRY</scope>
</reference>
<proteinExistence type="evidence at protein level"/>
<dbReference type="GO" id="GO:0005576">
    <property type="term" value="C:extracellular region"/>
    <property type="evidence" value="ECO:0007669"/>
    <property type="project" value="UniProtKB-SubCell"/>
</dbReference>
<dbReference type="GO" id="GO:0042742">
    <property type="term" value="P:defense response to bacterium"/>
    <property type="evidence" value="ECO:0007669"/>
    <property type="project" value="UniProtKB-KW"/>
</dbReference>
<dbReference type="GO" id="GO:0050832">
    <property type="term" value="P:defense response to fungus"/>
    <property type="evidence" value="ECO:0007669"/>
    <property type="project" value="UniProtKB-KW"/>
</dbReference>
<dbReference type="GO" id="GO:0045087">
    <property type="term" value="P:innate immune response"/>
    <property type="evidence" value="ECO:0007669"/>
    <property type="project" value="UniProtKB-KW"/>
</dbReference>
<dbReference type="GO" id="GO:0031640">
    <property type="term" value="P:killing of cells of another organism"/>
    <property type="evidence" value="ECO:0007669"/>
    <property type="project" value="UniProtKB-KW"/>
</dbReference>
<dbReference type="InterPro" id="IPR035171">
    <property type="entry name" value="Megourin"/>
</dbReference>
<dbReference type="Pfam" id="PF17560">
    <property type="entry name" value="Megourin"/>
    <property type="match status" value="1"/>
</dbReference>
<comment type="function">
    <text evidence="1 2">Has antimicrobial activity against Gram-positive bacteria and fungi.</text>
</comment>
<comment type="subunit">
    <text evidence="1 2">Monomer.</text>
</comment>
<comment type="subcellular location">
    <subcellularLocation>
        <location evidence="2">Secreted</location>
    </subcellularLocation>
</comment>
<comment type="induction">
    <text evidence="1 2">By bacterial infection.</text>
</comment>
<comment type="PTM">
    <text>Contains four disulfide bonds.</text>
</comment>
<comment type="mass spectrometry"/>
<evidence type="ECO:0000269" key="1">
    <source ref="1"/>
</evidence>
<evidence type="ECO:0000305" key="2"/>
<accession>P83419</accession>
<sequence>YLDVNQIASYLLCLGEGAVFNGRKTCQIGCRAACQQPGCGGYKECEQIPNIRLHKYRCHCISG</sequence>
<keyword id="KW-0044">Antibiotic</keyword>
<keyword id="KW-0929">Antimicrobial</keyword>
<keyword id="KW-0903">Direct protein sequencing</keyword>
<keyword id="KW-1015">Disulfide bond</keyword>
<keyword id="KW-0295">Fungicide</keyword>
<keyword id="KW-0391">Immunity</keyword>
<keyword id="KW-0399">Innate immunity</keyword>
<keyword id="KW-0964">Secreted</keyword>
<feature type="chain" id="PRO_0000096578" description="Megourin-3">
    <location>
        <begin position="1"/>
        <end position="63"/>
    </location>
</feature>